<protein>
    <recommendedName>
        <fullName>Tetratricopeptide repeat protein 32</fullName>
        <shortName>TPR repeat protein 32</shortName>
    </recommendedName>
</protein>
<organism>
    <name type="scientific">Homo sapiens</name>
    <name type="common">Human</name>
    <dbReference type="NCBI Taxonomy" id="9606"/>
    <lineage>
        <taxon>Eukaryota</taxon>
        <taxon>Metazoa</taxon>
        <taxon>Chordata</taxon>
        <taxon>Craniata</taxon>
        <taxon>Vertebrata</taxon>
        <taxon>Euteleostomi</taxon>
        <taxon>Mammalia</taxon>
        <taxon>Eutheria</taxon>
        <taxon>Euarchontoglires</taxon>
        <taxon>Primates</taxon>
        <taxon>Haplorrhini</taxon>
        <taxon>Catarrhini</taxon>
        <taxon>Hominidae</taxon>
        <taxon>Homo</taxon>
    </lineage>
</organism>
<comment type="interaction">
    <interactant intactId="EBI-8636434">
        <id>Q5I0X7</id>
    </interactant>
    <interactant intactId="EBI-5458244">
        <id>Q99856</id>
        <label>ARID3A</label>
    </interactant>
    <organismsDiffer>false</organismsDiffer>
    <experiments>3</experiments>
</comment>
<comment type="interaction">
    <interactant intactId="EBI-8636434">
        <id>Q5I0X7</id>
    </interactant>
    <interactant intactId="EBI-10244131">
        <id>Q8TES7-6</id>
        <label>FBF1</label>
    </interactant>
    <organismsDiffer>false</organismsDiffer>
    <experiments>3</experiments>
</comment>
<comment type="interaction">
    <interactant intactId="EBI-8636434">
        <id>Q5I0X7</id>
    </interactant>
    <interactant intactId="EBI-716006">
        <id>Q9Y5V3</id>
        <label>MAGED1</label>
    </interactant>
    <organismsDiffer>false</organismsDiffer>
    <experiments>3</experiments>
</comment>
<comment type="interaction">
    <interactant intactId="EBI-8636434">
        <id>Q5I0X7</id>
    </interactant>
    <interactant intactId="EBI-3957793">
        <id>Q9GZV8</id>
        <label>PRDM14</label>
    </interactant>
    <organismsDiffer>false</organismsDiffer>
    <experiments>3</experiments>
</comment>
<comment type="interaction">
    <interactant intactId="EBI-8636434">
        <id>Q5I0X7</id>
    </interactant>
    <interactant intactId="EBI-739510">
        <id>Q9HCM9</id>
        <label>TRIM39</label>
    </interactant>
    <organismsDiffer>false</organismsDiffer>
    <experiments>3</experiments>
</comment>
<comment type="interaction">
    <interactant intactId="EBI-8636434">
        <id>Q5I0X7</id>
    </interactant>
    <interactant intactId="EBI-2932492">
        <id>Q99757</id>
        <label>TXN2</label>
    </interactant>
    <organismsDiffer>false</organismsDiffer>
    <experiments>3</experiments>
</comment>
<comment type="interaction">
    <interactant intactId="EBI-8636434">
        <id>Q5I0X7</id>
    </interactant>
    <interactant intactId="EBI-8648067">
        <id>P17022</id>
        <label>ZNF18</label>
    </interactant>
    <organismsDiffer>false</organismsDiffer>
    <experiments>3</experiments>
</comment>
<comment type="interaction">
    <interactant intactId="EBI-8636434">
        <id>Q5I0X7</id>
    </interactant>
    <interactant intactId="EBI-3937106">
        <id>Q9P2Y4</id>
        <label>ZNF219</label>
    </interactant>
    <organismsDiffer>false</organismsDiffer>
    <experiments>3</experiments>
</comment>
<accession>Q5I0X7</accession>
<name>TTC32_HUMAN</name>
<dbReference type="EMBL" id="BC057850">
    <property type="protein sequence ID" value="AAH57850.1"/>
    <property type="molecule type" value="mRNA"/>
</dbReference>
<dbReference type="CCDS" id="CCDS33151.1"/>
<dbReference type="RefSeq" id="NP_001008238.1">
    <property type="nucleotide sequence ID" value="NM_001008237.3"/>
</dbReference>
<dbReference type="SMR" id="Q5I0X7"/>
<dbReference type="BioGRID" id="126236">
    <property type="interactions" value="12"/>
</dbReference>
<dbReference type="FunCoup" id="Q5I0X7">
    <property type="interactions" value="212"/>
</dbReference>
<dbReference type="IntAct" id="Q5I0X7">
    <property type="interactions" value="10"/>
</dbReference>
<dbReference type="MINT" id="Q5I0X7"/>
<dbReference type="STRING" id="9606.ENSP00000333018"/>
<dbReference type="iPTMnet" id="Q5I0X7"/>
<dbReference type="PhosphoSitePlus" id="Q5I0X7"/>
<dbReference type="BioMuta" id="TTC32"/>
<dbReference type="DMDM" id="74755518"/>
<dbReference type="jPOST" id="Q5I0X7"/>
<dbReference type="MassIVE" id="Q5I0X7"/>
<dbReference type="PaxDb" id="9606-ENSP00000333018"/>
<dbReference type="PeptideAtlas" id="Q5I0X7"/>
<dbReference type="ProteomicsDB" id="62970"/>
<dbReference type="Pumba" id="Q5I0X7"/>
<dbReference type="Antibodypedia" id="27107">
    <property type="antibodies" value="249 antibodies from 19 providers"/>
</dbReference>
<dbReference type="DNASU" id="130502"/>
<dbReference type="Ensembl" id="ENST00000333610.4">
    <property type="protein sequence ID" value="ENSP00000333018.3"/>
    <property type="gene ID" value="ENSG00000183891.6"/>
</dbReference>
<dbReference type="GeneID" id="130502"/>
<dbReference type="KEGG" id="hsa:130502"/>
<dbReference type="MANE-Select" id="ENST00000333610.4">
    <property type="protein sequence ID" value="ENSP00000333018.3"/>
    <property type="RefSeq nucleotide sequence ID" value="NM_001008237.3"/>
    <property type="RefSeq protein sequence ID" value="NP_001008238.1"/>
</dbReference>
<dbReference type="UCSC" id="uc002rdg.4">
    <property type="organism name" value="human"/>
</dbReference>
<dbReference type="AGR" id="HGNC:32954"/>
<dbReference type="CTD" id="130502"/>
<dbReference type="GeneCards" id="TTC32"/>
<dbReference type="HGNC" id="HGNC:32954">
    <property type="gene designation" value="TTC32"/>
</dbReference>
<dbReference type="HPA" id="ENSG00000183891">
    <property type="expression patterns" value="Low tissue specificity"/>
</dbReference>
<dbReference type="neXtProt" id="NX_Q5I0X7"/>
<dbReference type="OpenTargets" id="ENSG00000183891"/>
<dbReference type="PharmGKB" id="PA145147867"/>
<dbReference type="VEuPathDB" id="HostDB:ENSG00000183891"/>
<dbReference type="eggNOG" id="KOG1124">
    <property type="taxonomic scope" value="Eukaryota"/>
</dbReference>
<dbReference type="GeneTree" id="ENSGT00390000011905"/>
<dbReference type="HOGENOM" id="CLU_151642_0_0_1"/>
<dbReference type="InParanoid" id="Q5I0X7"/>
<dbReference type="OMA" id="MEEDNSQ"/>
<dbReference type="OrthoDB" id="2017782at2759"/>
<dbReference type="PAN-GO" id="Q5I0X7">
    <property type="GO annotations" value="0 GO annotations based on evolutionary models"/>
</dbReference>
<dbReference type="PhylomeDB" id="Q5I0X7"/>
<dbReference type="PathwayCommons" id="Q5I0X7"/>
<dbReference type="SignaLink" id="Q5I0X7"/>
<dbReference type="BioGRID-ORCS" id="130502">
    <property type="hits" value="13 hits in 1155 CRISPR screens"/>
</dbReference>
<dbReference type="GenomeRNAi" id="130502"/>
<dbReference type="Pharos" id="Q5I0X7">
    <property type="development level" value="Tdark"/>
</dbReference>
<dbReference type="PRO" id="PR:Q5I0X7"/>
<dbReference type="Proteomes" id="UP000005640">
    <property type="component" value="Chromosome 2"/>
</dbReference>
<dbReference type="RNAct" id="Q5I0X7">
    <property type="molecule type" value="protein"/>
</dbReference>
<dbReference type="Bgee" id="ENSG00000183891">
    <property type="expression patterns" value="Expressed in corpus epididymis and 180 other cell types or tissues"/>
</dbReference>
<dbReference type="ExpressionAtlas" id="Q5I0X7">
    <property type="expression patterns" value="baseline and differential"/>
</dbReference>
<dbReference type="Gene3D" id="1.25.40.10">
    <property type="entry name" value="Tetratricopeptide repeat domain"/>
    <property type="match status" value="1"/>
</dbReference>
<dbReference type="InterPro" id="IPR011990">
    <property type="entry name" value="TPR-like_helical_dom_sf"/>
</dbReference>
<dbReference type="InterPro" id="IPR019734">
    <property type="entry name" value="TPR_rpt"/>
</dbReference>
<dbReference type="PANTHER" id="PTHR47059">
    <property type="entry name" value="TETRATRICOPEPTIDE REPEAT PROTEIN 32"/>
    <property type="match status" value="1"/>
</dbReference>
<dbReference type="PANTHER" id="PTHR47059:SF1">
    <property type="entry name" value="TETRATRICOPEPTIDE REPEAT PROTEIN 32"/>
    <property type="match status" value="1"/>
</dbReference>
<dbReference type="Pfam" id="PF00515">
    <property type="entry name" value="TPR_1"/>
    <property type="match status" value="1"/>
</dbReference>
<dbReference type="Pfam" id="PF13432">
    <property type="entry name" value="TPR_16"/>
    <property type="match status" value="1"/>
</dbReference>
<dbReference type="Pfam" id="PF13181">
    <property type="entry name" value="TPR_8"/>
    <property type="match status" value="1"/>
</dbReference>
<dbReference type="SMART" id="SM00028">
    <property type="entry name" value="TPR"/>
    <property type="match status" value="2"/>
</dbReference>
<dbReference type="SUPFAM" id="SSF48452">
    <property type="entry name" value="TPR-like"/>
    <property type="match status" value="1"/>
</dbReference>
<dbReference type="PROSITE" id="PS50005">
    <property type="entry name" value="TPR"/>
    <property type="match status" value="2"/>
</dbReference>
<dbReference type="PROSITE" id="PS50293">
    <property type="entry name" value="TPR_REGION"/>
    <property type="match status" value="1"/>
</dbReference>
<proteinExistence type="evidence at protein level"/>
<keyword id="KW-1267">Proteomics identification</keyword>
<keyword id="KW-1185">Reference proteome</keyword>
<keyword id="KW-0677">Repeat</keyword>
<keyword id="KW-0802">TPR repeat</keyword>
<sequence>MEGQRQESHATLTLAQAHFNNGEYAEAEALYSAYIRRCACAASSDESPGSKCSPEDLATAYNNRGQIKYFRVDFYEAMDDYTSAIEVQPNFEVPYYNRGLILYRLGYFDDALEDFKKVLDLNPGFQDATLSLKQTILDKEEKQRRNVAKNY</sequence>
<gene>
    <name type="primary">TTC32</name>
</gene>
<reference key="1">
    <citation type="journal article" date="2004" name="Genome Res.">
        <title>The status, quality, and expansion of the NIH full-length cDNA project: the Mammalian Gene Collection (MGC).</title>
        <authorList>
            <consortium name="The MGC Project Team"/>
        </authorList>
    </citation>
    <scope>NUCLEOTIDE SEQUENCE [LARGE SCALE MRNA]</scope>
    <source>
        <tissue>Brain</tissue>
    </source>
</reference>
<feature type="chain" id="PRO_0000263100" description="Tetratricopeptide repeat protein 32">
    <location>
        <begin position="1"/>
        <end position="151"/>
    </location>
</feature>
<feature type="repeat" description="TPR 1">
    <location>
        <begin position="8"/>
        <end position="41"/>
    </location>
</feature>
<feature type="repeat" description="TPR 2">
    <location>
        <begin position="58"/>
        <end position="91"/>
    </location>
</feature>
<feature type="repeat" description="TPR 3">
    <location>
        <begin position="92"/>
        <end position="125"/>
    </location>
</feature>